<sequence>MPKVGVEQSLTAISEELRGMGYDVVQLKQEQDAQGCDCCVITGQDQNVMGIQNAVTQGAVINASGLTAEEVCQQVDQRLRQQ</sequence>
<name>Y2667_HALH5</name>
<gene>
    <name type="ordered locus">BH2667</name>
</gene>
<comment type="similarity">
    <text evidence="1">Belongs to the UPF0180 family.</text>
</comment>
<dbReference type="EMBL" id="BA000004">
    <property type="protein sequence ID" value="BAB06386.1"/>
    <property type="molecule type" value="Genomic_DNA"/>
</dbReference>
<dbReference type="PIR" id="C83983">
    <property type="entry name" value="C83983"/>
</dbReference>
<dbReference type="RefSeq" id="WP_010898816.1">
    <property type="nucleotide sequence ID" value="NC_002570.2"/>
</dbReference>
<dbReference type="STRING" id="272558.gene:10728565"/>
<dbReference type="GeneID" id="87598179"/>
<dbReference type="KEGG" id="bha:BH2667"/>
<dbReference type="eggNOG" id="ENOG503307C">
    <property type="taxonomic scope" value="Bacteria"/>
</dbReference>
<dbReference type="HOGENOM" id="CLU_187365_0_0_9"/>
<dbReference type="OrthoDB" id="1708042at2"/>
<dbReference type="Proteomes" id="UP000001258">
    <property type="component" value="Chromosome"/>
</dbReference>
<dbReference type="HAMAP" id="MF_00506">
    <property type="entry name" value="UPF0180"/>
    <property type="match status" value="1"/>
</dbReference>
<dbReference type="InterPro" id="IPR005370">
    <property type="entry name" value="UPF0180"/>
</dbReference>
<dbReference type="NCBIfam" id="NF002845">
    <property type="entry name" value="PRK03094.1"/>
    <property type="match status" value="1"/>
</dbReference>
<dbReference type="Pfam" id="PF03698">
    <property type="entry name" value="UPF0180"/>
    <property type="match status" value="1"/>
</dbReference>
<organism>
    <name type="scientific">Halalkalibacterium halodurans (strain ATCC BAA-125 / DSM 18197 / FERM 7344 / JCM 9153 / C-125)</name>
    <name type="common">Bacillus halodurans</name>
    <dbReference type="NCBI Taxonomy" id="272558"/>
    <lineage>
        <taxon>Bacteria</taxon>
        <taxon>Bacillati</taxon>
        <taxon>Bacillota</taxon>
        <taxon>Bacilli</taxon>
        <taxon>Bacillales</taxon>
        <taxon>Bacillaceae</taxon>
        <taxon>Halalkalibacterium (ex Joshi et al. 2022)</taxon>
    </lineage>
</organism>
<evidence type="ECO:0000255" key="1">
    <source>
        <dbReference type="HAMAP-Rule" id="MF_00506"/>
    </source>
</evidence>
<protein>
    <recommendedName>
        <fullName evidence="1">UPF0180 protein BH2667</fullName>
    </recommendedName>
</protein>
<reference key="1">
    <citation type="journal article" date="2000" name="Nucleic Acids Res.">
        <title>Complete genome sequence of the alkaliphilic bacterium Bacillus halodurans and genomic sequence comparison with Bacillus subtilis.</title>
        <authorList>
            <person name="Takami H."/>
            <person name="Nakasone K."/>
            <person name="Takaki Y."/>
            <person name="Maeno G."/>
            <person name="Sasaki R."/>
            <person name="Masui N."/>
            <person name="Fuji F."/>
            <person name="Hirama C."/>
            <person name="Nakamura Y."/>
            <person name="Ogasawara N."/>
            <person name="Kuhara S."/>
            <person name="Horikoshi K."/>
        </authorList>
    </citation>
    <scope>NUCLEOTIDE SEQUENCE [LARGE SCALE GENOMIC DNA]</scope>
    <source>
        <strain>ATCC BAA-125 / DSM 18197 / FERM 7344 / JCM 9153 / C-125</strain>
    </source>
</reference>
<proteinExistence type="inferred from homology"/>
<feature type="chain" id="PRO_0000172739" description="UPF0180 protein BH2667">
    <location>
        <begin position="1"/>
        <end position="82"/>
    </location>
</feature>
<keyword id="KW-1185">Reference proteome</keyword>
<accession>Q9K9I0</accession>